<comment type="function">
    <text>May be involved in transcriptional regulation.</text>
</comment>
<comment type="interaction">
    <interactant intactId="EBI-8489229">
        <id>Q9BSG1</id>
    </interactant>
    <interactant intactId="EBI-739789">
        <id>Q92997</id>
        <label>DVL3</label>
    </interactant>
    <organismsDiffer>false</organismsDiffer>
    <experiments>3</experiments>
</comment>
<comment type="interaction">
    <interactant intactId="EBI-8489229">
        <id>Q9BSG1</id>
    </interactant>
    <interactant intactId="EBI-466029">
        <id>P42858</id>
        <label>HTT</label>
    </interactant>
    <organismsDiffer>false</organismsDiffer>
    <experiments>3</experiments>
</comment>
<comment type="interaction">
    <interactant intactId="EBI-8489229">
        <id>Q9BSG1</id>
    </interactant>
    <interactant intactId="EBI-12023934">
        <id>Q5MJ10</id>
        <label>SPANXN2</label>
    </interactant>
    <organismsDiffer>false</organismsDiffer>
    <experiments>3</experiments>
</comment>
<comment type="interaction">
    <interactant intactId="EBI-8489229">
        <id>Q9BSG1</id>
    </interactant>
    <interactant intactId="EBI-725997">
        <id>Q8WV44</id>
        <label>TRIM41</label>
    </interactant>
    <organismsDiffer>false</organismsDiffer>
    <experiments>3</experiments>
</comment>
<comment type="interaction">
    <interactant intactId="EBI-10297542">
        <id>Q9BSG1-2</id>
    </interactant>
    <interactant intactId="EBI-10172290">
        <id>P60409</id>
        <label>KRTAP10-7</label>
    </interactant>
    <organismsDiffer>false</organismsDiffer>
    <experiments>3</experiments>
</comment>
<comment type="interaction">
    <interactant intactId="EBI-10297542">
        <id>Q9BSG1-2</id>
    </interactant>
    <interactant intactId="EBI-744794">
        <id>Q9BZW7</id>
        <label>TSGA10</label>
    </interactant>
    <organismsDiffer>false</organismsDiffer>
    <experiments>3</experiments>
</comment>
<comment type="subcellular location">
    <subcellularLocation>
        <location evidence="4">Nucleus</location>
    </subcellularLocation>
</comment>
<comment type="alternative products">
    <event type="alternative splicing"/>
    <isoform>
        <id>Q9BSG1-2</id>
        <name>2</name>
        <sequence type="displayed"/>
    </isoform>
    <isoform>
        <id>Q9BSG1-3</id>
        <name>3</name>
        <sequence type="described" ref="VSP_060238"/>
    </isoform>
    <isoform>
        <id>Q9BSG1-4</id>
        <name>4</name>
        <sequence type="described" ref="VSP_060237"/>
    </isoform>
</comment>
<comment type="similarity">
    <text evidence="4">Belongs to the krueppel C2H2-type zinc-finger protein family.</text>
</comment>
<comment type="sequence caution" evidence="4">
    <conflict type="erroneous gene model prediction">
        <sequence resource="EMBL-CDS" id="AAX88982"/>
    </conflict>
</comment>
<dbReference type="EMBL" id="AK295739">
    <property type="protein sequence ID" value="BAG58576.1"/>
    <property type="molecule type" value="mRNA"/>
</dbReference>
<dbReference type="EMBL" id="AK315829">
    <property type="protein sequence ID" value="BAF98720.1"/>
    <property type="molecule type" value="mRNA"/>
</dbReference>
<dbReference type="EMBL" id="AC092835">
    <property type="protein sequence ID" value="AAX88982.1"/>
    <property type="status" value="ALT_SEQ"/>
    <property type="molecule type" value="Genomic_DNA"/>
</dbReference>
<dbReference type="EMBL" id="KF459620">
    <property type="status" value="NOT_ANNOTATED_CDS"/>
    <property type="molecule type" value="Genomic_DNA"/>
</dbReference>
<dbReference type="EMBL" id="CH471219">
    <property type="protein sequence ID" value="EAX10715.1"/>
    <property type="molecule type" value="Genomic_DNA"/>
</dbReference>
<dbReference type="EMBL" id="BC005068">
    <property type="protein sequence ID" value="AAH05068.2"/>
    <property type="molecule type" value="mRNA"/>
</dbReference>
<dbReference type="EMBL" id="BC009976">
    <property type="protein sequence ID" value="AAH09976.2"/>
    <property type="molecule type" value="mRNA"/>
</dbReference>
<dbReference type="EMBL" id="X60152">
    <property type="protein sequence ID" value="CAB52138.1"/>
    <property type="molecule type" value="mRNA"/>
</dbReference>
<dbReference type="CCDS" id="CCDS42712.1">
    <molecule id="Q9BSG1-2"/>
</dbReference>
<dbReference type="CCDS" id="CCDS42713.1">
    <molecule id="Q9BSG1-3"/>
</dbReference>
<dbReference type="CCDS" id="CCDS62957.1">
    <molecule id="Q9BSG1-4"/>
</dbReference>
<dbReference type="RefSeq" id="NP_001017396.1">
    <molecule id="Q9BSG1-3"/>
    <property type="nucleotide sequence ID" value="NM_001017396.3"/>
</dbReference>
<dbReference type="RefSeq" id="NP_001269327.1">
    <molecule id="Q9BSG1-4"/>
    <property type="nucleotide sequence ID" value="NM_001282398.2"/>
</dbReference>
<dbReference type="RefSeq" id="NP_066574.2">
    <molecule id="Q9BSG1-2"/>
    <property type="nucleotide sequence ID" value="NM_021088.4"/>
</dbReference>
<dbReference type="SMR" id="Q9BSG1"/>
<dbReference type="BioGRID" id="113381">
    <property type="interactions" value="79"/>
</dbReference>
<dbReference type="FunCoup" id="Q9BSG1">
    <property type="interactions" value="119"/>
</dbReference>
<dbReference type="IntAct" id="Q9BSG1">
    <property type="interactions" value="89"/>
</dbReference>
<dbReference type="MINT" id="Q9BSG1"/>
<dbReference type="STRING" id="9606.ENSP00000482030"/>
<dbReference type="iPTMnet" id="Q9BSG1"/>
<dbReference type="PhosphoSitePlus" id="Q9BSG1"/>
<dbReference type="BioMuta" id="ZNF2"/>
<dbReference type="DMDM" id="527504091"/>
<dbReference type="jPOST" id="Q9BSG1"/>
<dbReference type="MassIVE" id="Q9BSG1"/>
<dbReference type="PaxDb" id="9606-ENSP00000480297"/>
<dbReference type="PeptideAtlas" id="Q9BSG1"/>
<dbReference type="ProteomicsDB" id="2270"/>
<dbReference type="ProteomicsDB" id="4323"/>
<dbReference type="Antibodypedia" id="72445">
    <property type="antibodies" value="146 antibodies from 22 providers"/>
</dbReference>
<dbReference type="DNASU" id="7549"/>
<dbReference type="Ensembl" id="ENST00000614034.5">
    <molecule id="Q9BSG1-2"/>
    <property type="protein sequence ID" value="ENSP00000480297.1"/>
    <property type="gene ID" value="ENSG00000275111.5"/>
</dbReference>
<dbReference type="Ensembl" id="ENST00000617923.4">
    <molecule id="Q9BSG1-3"/>
    <property type="protein sequence ID" value="ENSP00000480057.1"/>
    <property type="gene ID" value="ENSG00000275111.5"/>
</dbReference>
<dbReference type="Ensembl" id="ENST00000622059.4">
    <molecule id="Q9BSG1-4"/>
    <property type="protein sequence ID" value="ENSP00000483131.1"/>
    <property type="gene ID" value="ENSG00000275111.5"/>
</dbReference>
<dbReference type="GeneID" id="7549"/>
<dbReference type="KEGG" id="hsa:7549"/>
<dbReference type="MANE-Select" id="ENST00000614034.5">
    <property type="protein sequence ID" value="ENSP00000480297.1"/>
    <property type="RefSeq nucleotide sequence ID" value="NM_021088.4"/>
    <property type="RefSeq protein sequence ID" value="NP_066574.2"/>
</dbReference>
<dbReference type="UCSC" id="uc032nuy.2">
    <molecule id="Q9BSG1-2"/>
    <property type="organism name" value="human"/>
</dbReference>
<dbReference type="UCSC" id="uc032nva.2">
    <property type="organism name" value="human"/>
</dbReference>
<dbReference type="AGR" id="HGNC:12991"/>
<dbReference type="CTD" id="7549"/>
<dbReference type="DisGeNET" id="7549"/>
<dbReference type="GeneCards" id="ZNF2"/>
<dbReference type="HGNC" id="HGNC:12991">
    <property type="gene designation" value="ZNF2"/>
</dbReference>
<dbReference type="HPA" id="ENSG00000275111">
    <property type="expression patterns" value="Low tissue specificity"/>
</dbReference>
<dbReference type="MIM" id="194500">
    <property type="type" value="gene"/>
</dbReference>
<dbReference type="neXtProt" id="NX_Q9BSG1"/>
<dbReference type="OpenTargets" id="ENSG00000275111"/>
<dbReference type="PharmGKB" id="PA37571"/>
<dbReference type="VEuPathDB" id="HostDB:ENSG00000275111"/>
<dbReference type="eggNOG" id="KOG1721">
    <property type="taxonomic scope" value="Eukaryota"/>
</dbReference>
<dbReference type="GeneTree" id="ENSGT00940000160826"/>
<dbReference type="HOGENOM" id="CLU_002678_44_0_1"/>
<dbReference type="InParanoid" id="Q9BSG1"/>
<dbReference type="OMA" id="TKERGHE"/>
<dbReference type="OrthoDB" id="6077919at2759"/>
<dbReference type="PAN-GO" id="Q9BSG1">
    <property type="GO annotations" value="4 GO annotations based on evolutionary models"/>
</dbReference>
<dbReference type="TreeFam" id="TF340946"/>
<dbReference type="PathwayCommons" id="Q9BSG1"/>
<dbReference type="Reactome" id="R-HSA-212436">
    <property type="pathway name" value="Generic Transcription Pathway"/>
</dbReference>
<dbReference type="SignaLink" id="Q9BSG1"/>
<dbReference type="BioGRID-ORCS" id="7549">
    <property type="hits" value="12 hits in 1175 CRISPR screens"/>
</dbReference>
<dbReference type="GenomeRNAi" id="7549"/>
<dbReference type="Pharos" id="Q9BSG1">
    <property type="development level" value="Tbio"/>
</dbReference>
<dbReference type="PRO" id="PR:Q9BSG1"/>
<dbReference type="Proteomes" id="UP000005640">
    <property type="component" value="Chromosome 2"/>
</dbReference>
<dbReference type="RNAct" id="Q9BSG1">
    <property type="molecule type" value="protein"/>
</dbReference>
<dbReference type="Bgee" id="ENSG00000275111">
    <property type="expression patterns" value="Expressed in male germ line stem cell (sensu Vertebrata) in testis and 125 other cell types or tissues"/>
</dbReference>
<dbReference type="ExpressionAtlas" id="Q9BSG1">
    <property type="expression patterns" value="baseline and differential"/>
</dbReference>
<dbReference type="GO" id="GO:0005634">
    <property type="term" value="C:nucleus"/>
    <property type="evidence" value="ECO:0007669"/>
    <property type="project" value="UniProtKB-SubCell"/>
</dbReference>
<dbReference type="GO" id="GO:0003677">
    <property type="term" value="F:DNA binding"/>
    <property type="evidence" value="ECO:0007669"/>
    <property type="project" value="UniProtKB-KW"/>
</dbReference>
<dbReference type="GO" id="GO:0008270">
    <property type="term" value="F:zinc ion binding"/>
    <property type="evidence" value="ECO:0000303"/>
    <property type="project" value="UniProtKB"/>
</dbReference>
<dbReference type="GO" id="GO:0006355">
    <property type="term" value="P:regulation of DNA-templated transcription"/>
    <property type="evidence" value="ECO:0000303"/>
    <property type="project" value="UniProtKB"/>
</dbReference>
<dbReference type="CDD" id="cd07765">
    <property type="entry name" value="KRAB_A-box"/>
    <property type="match status" value="1"/>
</dbReference>
<dbReference type="FunFam" id="3.30.160.60:FF:001677">
    <property type="entry name" value="Zinc finger protein 2"/>
    <property type="match status" value="1"/>
</dbReference>
<dbReference type="FunFam" id="3.30.160.60:FF:000380">
    <property type="entry name" value="zinc finger protein 2 isoform X2"/>
    <property type="match status" value="1"/>
</dbReference>
<dbReference type="FunFam" id="3.30.160.60:FF:000586">
    <property type="entry name" value="zinc finger protein 2 isoform X2"/>
    <property type="match status" value="1"/>
</dbReference>
<dbReference type="FunFam" id="3.30.160.60:FF:000794">
    <property type="entry name" value="zinc finger protein 2 isoform X2"/>
    <property type="match status" value="2"/>
</dbReference>
<dbReference type="FunFam" id="3.30.160.60:FF:000947">
    <property type="entry name" value="zinc finger protein 2 isoform X2"/>
    <property type="match status" value="1"/>
</dbReference>
<dbReference type="FunFam" id="3.30.160.60:FF:002343">
    <property type="entry name" value="Zinc finger protein 33A"/>
    <property type="match status" value="1"/>
</dbReference>
<dbReference type="FunFam" id="3.30.160.60:FF:000899">
    <property type="entry name" value="zinc finger protein 558 isoform X2"/>
    <property type="match status" value="1"/>
</dbReference>
<dbReference type="FunFam" id="3.30.160.60:FF:000737">
    <property type="entry name" value="Zinc finger protein 565"/>
    <property type="match status" value="1"/>
</dbReference>
<dbReference type="Gene3D" id="6.10.140.140">
    <property type="match status" value="1"/>
</dbReference>
<dbReference type="Gene3D" id="3.30.160.60">
    <property type="entry name" value="Classic Zinc Finger"/>
    <property type="match status" value="9"/>
</dbReference>
<dbReference type="InterPro" id="IPR001909">
    <property type="entry name" value="KRAB"/>
</dbReference>
<dbReference type="InterPro" id="IPR036051">
    <property type="entry name" value="KRAB_dom_sf"/>
</dbReference>
<dbReference type="InterPro" id="IPR050758">
    <property type="entry name" value="Znf_C2H2-type"/>
</dbReference>
<dbReference type="InterPro" id="IPR036236">
    <property type="entry name" value="Znf_C2H2_sf"/>
</dbReference>
<dbReference type="InterPro" id="IPR013087">
    <property type="entry name" value="Znf_C2H2_type"/>
</dbReference>
<dbReference type="PANTHER" id="PTHR23234:SF10">
    <property type="entry name" value="RIKEN CDNA 6720489N17 GENE-RELATED"/>
    <property type="match status" value="1"/>
</dbReference>
<dbReference type="PANTHER" id="PTHR23234">
    <property type="entry name" value="ZNF44 PROTEIN"/>
    <property type="match status" value="1"/>
</dbReference>
<dbReference type="Pfam" id="PF01352">
    <property type="entry name" value="KRAB"/>
    <property type="match status" value="1"/>
</dbReference>
<dbReference type="Pfam" id="PF00096">
    <property type="entry name" value="zf-C2H2"/>
    <property type="match status" value="9"/>
</dbReference>
<dbReference type="SMART" id="SM00349">
    <property type="entry name" value="KRAB"/>
    <property type="match status" value="1"/>
</dbReference>
<dbReference type="SMART" id="SM00355">
    <property type="entry name" value="ZnF_C2H2"/>
    <property type="match status" value="9"/>
</dbReference>
<dbReference type="SUPFAM" id="SSF57667">
    <property type="entry name" value="beta-beta-alpha zinc fingers"/>
    <property type="match status" value="5"/>
</dbReference>
<dbReference type="SUPFAM" id="SSF109640">
    <property type="entry name" value="KRAB domain (Kruppel-associated box)"/>
    <property type="match status" value="1"/>
</dbReference>
<dbReference type="PROSITE" id="PS50805">
    <property type="entry name" value="KRAB"/>
    <property type="match status" value="1"/>
</dbReference>
<dbReference type="PROSITE" id="PS00028">
    <property type="entry name" value="ZINC_FINGER_C2H2_1"/>
    <property type="match status" value="8"/>
</dbReference>
<dbReference type="PROSITE" id="PS50157">
    <property type="entry name" value="ZINC_FINGER_C2H2_2"/>
    <property type="match status" value="9"/>
</dbReference>
<keyword id="KW-0025">Alternative splicing</keyword>
<keyword id="KW-0238">DNA-binding</keyword>
<keyword id="KW-0479">Metal-binding</keyword>
<keyword id="KW-0539">Nucleus</keyword>
<keyword id="KW-1267">Proteomics identification</keyword>
<keyword id="KW-1185">Reference proteome</keyword>
<keyword id="KW-0677">Repeat</keyword>
<keyword id="KW-0804">Transcription</keyword>
<keyword id="KW-0805">Transcription regulation</keyword>
<keyword id="KW-0862">Zinc</keyword>
<keyword id="KW-0863">Zinc-finger</keyword>
<accession>Q9BSG1</accession>
<accession>A8MWV7</accession>
<accession>B0AZN8</accession>
<accession>B4DIR4</accession>
<accession>Q4ZFY6</accession>
<accession>Q96G44</accession>
<accession>Q9UMC5</accession>
<evidence type="ECO:0000255" key="1">
    <source>
        <dbReference type="PROSITE-ProRule" id="PRU00042"/>
    </source>
</evidence>
<evidence type="ECO:0000255" key="2">
    <source>
        <dbReference type="PROSITE-ProRule" id="PRU00119"/>
    </source>
</evidence>
<evidence type="ECO:0000256" key="3">
    <source>
        <dbReference type="SAM" id="MobiDB-lite"/>
    </source>
</evidence>
<evidence type="ECO:0000305" key="4"/>
<evidence type="ECO:0000312" key="5">
    <source>
        <dbReference type="HGNC" id="HGNC:12991"/>
    </source>
</evidence>
<feature type="chain" id="PRO_0000274049" description="Zinc finger protein 2">
    <location>
        <begin position="1"/>
        <end position="425"/>
    </location>
</feature>
<feature type="domain" description="KRAB" evidence="2">
    <location>
        <begin position="14"/>
        <end position="85"/>
    </location>
</feature>
<feature type="zinc finger region" description="C2H2-type 1" evidence="1">
    <location>
        <begin position="173"/>
        <end position="195"/>
    </location>
</feature>
<feature type="zinc finger region" description="C2H2-type 2" evidence="1">
    <location>
        <begin position="201"/>
        <end position="223"/>
    </location>
</feature>
<feature type="zinc finger region" description="C2H2-type 3" evidence="1">
    <location>
        <begin position="229"/>
        <end position="251"/>
    </location>
</feature>
<feature type="zinc finger region" description="C2H2-type 4" evidence="1">
    <location>
        <begin position="257"/>
        <end position="279"/>
    </location>
</feature>
<feature type="zinc finger region" description="C2H2-type 5" evidence="1">
    <location>
        <begin position="285"/>
        <end position="307"/>
    </location>
</feature>
<feature type="zinc finger region" description="C2H2-type 6" evidence="1">
    <location>
        <begin position="313"/>
        <end position="335"/>
    </location>
</feature>
<feature type="zinc finger region" description="C2H2-type 7" evidence="1">
    <location>
        <begin position="341"/>
        <end position="363"/>
    </location>
</feature>
<feature type="zinc finger region" description="C2H2-type 8" evidence="1">
    <location>
        <begin position="369"/>
        <end position="391"/>
    </location>
</feature>
<feature type="zinc finger region" description="C2H2-type 9; degenerate" evidence="1">
    <location>
        <begin position="397"/>
        <end position="419"/>
    </location>
</feature>
<feature type="region of interest" description="Disordered" evidence="3">
    <location>
        <begin position="86"/>
        <end position="110"/>
    </location>
</feature>
<feature type="region of interest" description="Disordered" evidence="3">
    <location>
        <begin position="122"/>
        <end position="163"/>
    </location>
</feature>
<feature type="compositionally biased region" description="Basic and acidic residues" evidence="3">
    <location>
        <begin position="93"/>
        <end position="110"/>
    </location>
</feature>
<feature type="compositionally biased region" description="Basic and acidic residues" evidence="3">
    <location>
        <begin position="144"/>
        <end position="154"/>
    </location>
</feature>
<feature type="splice variant" id="VSP_060238" description="In isoform 3.">
    <location>
        <begin position="1"/>
        <end position="42"/>
    </location>
</feature>
<feature type="splice variant" id="VSP_060237" description="In isoform 4.">
    <location>
        <begin position="54"/>
        <end position="91"/>
    </location>
</feature>
<feature type="sequence conflict" description="In Ref. 5; CAB52138." evidence="4" ref="5">
    <original>MAAVSPTTRCQ</original>
    <variation>RGAVFPGPEHSVPE</variation>
    <location>
        <begin position="1"/>
        <end position="11"/>
    </location>
</feature>
<feature type="sequence conflict" description="In Ref. 1; BAG58576." evidence="4" ref="1">
    <original>R</original>
    <variation>RR</variation>
    <location>
        <position position="159"/>
    </location>
</feature>
<feature type="sequence conflict" description="In Ref. 4; AAH05068." evidence="4" ref="4">
    <original>Y</original>
    <variation>H</variation>
    <location>
        <position position="369"/>
    </location>
</feature>
<reference key="1">
    <citation type="journal article" date="2004" name="Nat. Genet.">
        <title>Complete sequencing and characterization of 21,243 full-length human cDNAs.</title>
        <authorList>
            <person name="Ota T."/>
            <person name="Suzuki Y."/>
            <person name="Nishikawa T."/>
            <person name="Otsuki T."/>
            <person name="Sugiyama T."/>
            <person name="Irie R."/>
            <person name="Wakamatsu A."/>
            <person name="Hayashi K."/>
            <person name="Sato H."/>
            <person name="Nagai K."/>
            <person name="Kimura K."/>
            <person name="Makita H."/>
            <person name="Sekine M."/>
            <person name="Obayashi M."/>
            <person name="Nishi T."/>
            <person name="Shibahara T."/>
            <person name="Tanaka T."/>
            <person name="Ishii S."/>
            <person name="Yamamoto J."/>
            <person name="Saito K."/>
            <person name="Kawai Y."/>
            <person name="Isono Y."/>
            <person name="Nakamura Y."/>
            <person name="Nagahari K."/>
            <person name="Murakami K."/>
            <person name="Yasuda T."/>
            <person name="Iwayanagi T."/>
            <person name="Wagatsuma M."/>
            <person name="Shiratori A."/>
            <person name="Sudo H."/>
            <person name="Hosoiri T."/>
            <person name="Kaku Y."/>
            <person name="Kodaira H."/>
            <person name="Kondo H."/>
            <person name="Sugawara M."/>
            <person name="Takahashi M."/>
            <person name="Kanda K."/>
            <person name="Yokoi T."/>
            <person name="Furuya T."/>
            <person name="Kikkawa E."/>
            <person name="Omura Y."/>
            <person name="Abe K."/>
            <person name="Kamihara K."/>
            <person name="Katsuta N."/>
            <person name="Sato K."/>
            <person name="Tanikawa M."/>
            <person name="Yamazaki M."/>
            <person name="Ninomiya K."/>
            <person name="Ishibashi T."/>
            <person name="Yamashita H."/>
            <person name="Murakawa K."/>
            <person name="Fujimori K."/>
            <person name="Tanai H."/>
            <person name="Kimata M."/>
            <person name="Watanabe M."/>
            <person name="Hiraoka S."/>
            <person name="Chiba Y."/>
            <person name="Ishida S."/>
            <person name="Ono Y."/>
            <person name="Takiguchi S."/>
            <person name="Watanabe S."/>
            <person name="Yosida M."/>
            <person name="Hotuta T."/>
            <person name="Kusano J."/>
            <person name="Kanehori K."/>
            <person name="Takahashi-Fujii A."/>
            <person name="Hara H."/>
            <person name="Tanase T.-O."/>
            <person name="Nomura Y."/>
            <person name="Togiya S."/>
            <person name="Komai F."/>
            <person name="Hara R."/>
            <person name="Takeuchi K."/>
            <person name="Arita M."/>
            <person name="Imose N."/>
            <person name="Musashino K."/>
            <person name="Yuuki H."/>
            <person name="Oshima A."/>
            <person name="Sasaki N."/>
            <person name="Aotsuka S."/>
            <person name="Yoshikawa Y."/>
            <person name="Matsunawa H."/>
            <person name="Ichihara T."/>
            <person name="Shiohata N."/>
            <person name="Sano S."/>
            <person name="Moriya S."/>
            <person name="Momiyama H."/>
            <person name="Satoh N."/>
            <person name="Takami S."/>
            <person name="Terashima Y."/>
            <person name="Suzuki O."/>
            <person name="Nakagawa S."/>
            <person name="Senoh A."/>
            <person name="Mizoguchi H."/>
            <person name="Goto Y."/>
            <person name="Shimizu F."/>
            <person name="Wakebe H."/>
            <person name="Hishigaki H."/>
            <person name="Watanabe T."/>
            <person name="Sugiyama A."/>
            <person name="Takemoto M."/>
            <person name="Kawakami B."/>
            <person name="Yamazaki M."/>
            <person name="Watanabe K."/>
            <person name="Kumagai A."/>
            <person name="Itakura S."/>
            <person name="Fukuzumi Y."/>
            <person name="Fujimori Y."/>
            <person name="Komiyama M."/>
            <person name="Tashiro H."/>
            <person name="Tanigami A."/>
            <person name="Fujiwara T."/>
            <person name="Ono T."/>
            <person name="Yamada K."/>
            <person name="Fujii Y."/>
            <person name="Ozaki K."/>
            <person name="Hirao M."/>
            <person name="Ohmori Y."/>
            <person name="Kawabata A."/>
            <person name="Hikiji T."/>
            <person name="Kobatake N."/>
            <person name="Inagaki H."/>
            <person name="Ikema Y."/>
            <person name="Okamoto S."/>
            <person name="Okitani R."/>
            <person name="Kawakami T."/>
            <person name="Noguchi S."/>
            <person name="Itoh T."/>
            <person name="Shigeta K."/>
            <person name="Senba T."/>
            <person name="Matsumura K."/>
            <person name="Nakajima Y."/>
            <person name="Mizuno T."/>
            <person name="Morinaga M."/>
            <person name="Sasaki M."/>
            <person name="Togashi T."/>
            <person name="Oyama M."/>
            <person name="Hata H."/>
            <person name="Watanabe M."/>
            <person name="Komatsu T."/>
            <person name="Mizushima-Sugano J."/>
            <person name="Satoh T."/>
            <person name="Shirai Y."/>
            <person name="Takahashi Y."/>
            <person name="Nakagawa K."/>
            <person name="Okumura K."/>
            <person name="Nagase T."/>
            <person name="Nomura N."/>
            <person name="Kikuchi H."/>
            <person name="Masuho Y."/>
            <person name="Yamashita R."/>
            <person name="Nakai K."/>
            <person name="Yada T."/>
            <person name="Nakamura Y."/>
            <person name="Ohara O."/>
            <person name="Isogai T."/>
            <person name="Sugano S."/>
        </authorList>
    </citation>
    <scope>NUCLEOTIDE SEQUENCE [LARGE SCALE MRNA] (ISOFORMS 3 AND 4)</scope>
    <source>
        <tissue>Hippocampus</tissue>
    </source>
</reference>
<reference key="2">
    <citation type="journal article" date="2005" name="Nature">
        <title>Generation and annotation of the DNA sequences of human chromosomes 2 and 4.</title>
        <authorList>
            <person name="Hillier L.W."/>
            <person name="Graves T.A."/>
            <person name="Fulton R.S."/>
            <person name="Fulton L.A."/>
            <person name="Pepin K.H."/>
            <person name="Minx P."/>
            <person name="Wagner-McPherson C."/>
            <person name="Layman D."/>
            <person name="Wylie K."/>
            <person name="Sekhon M."/>
            <person name="Becker M.C."/>
            <person name="Fewell G.A."/>
            <person name="Delehaunty K.D."/>
            <person name="Miner T.L."/>
            <person name="Nash W.E."/>
            <person name="Kremitzki C."/>
            <person name="Oddy L."/>
            <person name="Du H."/>
            <person name="Sun H."/>
            <person name="Bradshaw-Cordum H."/>
            <person name="Ali J."/>
            <person name="Carter J."/>
            <person name="Cordes M."/>
            <person name="Harris A."/>
            <person name="Isak A."/>
            <person name="van Brunt A."/>
            <person name="Nguyen C."/>
            <person name="Du F."/>
            <person name="Courtney L."/>
            <person name="Kalicki J."/>
            <person name="Ozersky P."/>
            <person name="Abbott S."/>
            <person name="Armstrong J."/>
            <person name="Belter E.A."/>
            <person name="Caruso L."/>
            <person name="Cedroni M."/>
            <person name="Cotton M."/>
            <person name="Davidson T."/>
            <person name="Desai A."/>
            <person name="Elliott G."/>
            <person name="Erb T."/>
            <person name="Fronick C."/>
            <person name="Gaige T."/>
            <person name="Haakenson W."/>
            <person name="Haglund K."/>
            <person name="Holmes A."/>
            <person name="Harkins R."/>
            <person name="Kim K."/>
            <person name="Kruchowski S.S."/>
            <person name="Strong C.M."/>
            <person name="Grewal N."/>
            <person name="Goyea E."/>
            <person name="Hou S."/>
            <person name="Levy A."/>
            <person name="Martinka S."/>
            <person name="Mead K."/>
            <person name="McLellan M.D."/>
            <person name="Meyer R."/>
            <person name="Randall-Maher J."/>
            <person name="Tomlinson C."/>
            <person name="Dauphin-Kohlberg S."/>
            <person name="Kozlowicz-Reilly A."/>
            <person name="Shah N."/>
            <person name="Swearengen-Shahid S."/>
            <person name="Snider J."/>
            <person name="Strong J.T."/>
            <person name="Thompson J."/>
            <person name="Yoakum M."/>
            <person name="Leonard S."/>
            <person name="Pearman C."/>
            <person name="Trani L."/>
            <person name="Radionenko M."/>
            <person name="Waligorski J.E."/>
            <person name="Wang C."/>
            <person name="Rock S.M."/>
            <person name="Tin-Wollam A.-M."/>
            <person name="Maupin R."/>
            <person name="Latreille P."/>
            <person name="Wendl M.C."/>
            <person name="Yang S.-P."/>
            <person name="Pohl C."/>
            <person name="Wallis J.W."/>
            <person name="Spieth J."/>
            <person name="Bieri T.A."/>
            <person name="Berkowicz N."/>
            <person name="Nelson J.O."/>
            <person name="Osborne J."/>
            <person name="Ding L."/>
            <person name="Meyer R."/>
            <person name="Sabo A."/>
            <person name="Shotland Y."/>
            <person name="Sinha P."/>
            <person name="Wohldmann P.E."/>
            <person name="Cook L.L."/>
            <person name="Hickenbotham M.T."/>
            <person name="Eldred J."/>
            <person name="Williams D."/>
            <person name="Jones T.A."/>
            <person name="She X."/>
            <person name="Ciccarelli F.D."/>
            <person name="Izaurralde E."/>
            <person name="Taylor J."/>
            <person name="Schmutz J."/>
            <person name="Myers R.M."/>
            <person name="Cox D.R."/>
            <person name="Huang X."/>
            <person name="McPherson J.D."/>
            <person name="Mardis E.R."/>
            <person name="Clifton S.W."/>
            <person name="Warren W.C."/>
            <person name="Chinwalla A.T."/>
            <person name="Eddy S.R."/>
            <person name="Marra M.A."/>
            <person name="Ovcharenko I."/>
            <person name="Furey T.S."/>
            <person name="Miller W."/>
            <person name="Eichler E.E."/>
            <person name="Bork P."/>
            <person name="Suyama M."/>
            <person name="Torrents D."/>
            <person name="Waterston R.H."/>
            <person name="Wilson R.K."/>
        </authorList>
    </citation>
    <scope>NUCLEOTIDE SEQUENCE [LARGE SCALE GENOMIC DNA]</scope>
</reference>
<reference key="3">
    <citation type="submission" date="2005-07" db="EMBL/GenBank/DDBJ databases">
        <authorList>
            <person name="Mural R.J."/>
            <person name="Istrail S."/>
            <person name="Sutton G.G."/>
            <person name="Florea L."/>
            <person name="Halpern A.L."/>
            <person name="Mobarry C.M."/>
            <person name="Lippert R."/>
            <person name="Walenz B."/>
            <person name="Shatkay H."/>
            <person name="Dew I."/>
            <person name="Miller J.R."/>
            <person name="Flanigan M.J."/>
            <person name="Edwards N.J."/>
            <person name="Bolanos R."/>
            <person name="Fasulo D."/>
            <person name="Halldorsson B.V."/>
            <person name="Hannenhalli S."/>
            <person name="Turner R."/>
            <person name="Yooseph S."/>
            <person name="Lu F."/>
            <person name="Nusskern D.R."/>
            <person name="Shue B.C."/>
            <person name="Zheng X.H."/>
            <person name="Zhong F."/>
            <person name="Delcher A.L."/>
            <person name="Huson D.H."/>
            <person name="Kravitz S.A."/>
            <person name="Mouchard L."/>
            <person name="Reinert K."/>
            <person name="Remington K.A."/>
            <person name="Clark A.G."/>
            <person name="Waterman M.S."/>
            <person name="Eichler E.E."/>
            <person name="Adams M.D."/>
            <person name="Hunkapiller M.W."/>
            <person name="Myers E.W."/>
            <person name="Venter J.C."/>
        </authorList>
    </citation>
    <scope>NUCLEOTIDE SEQUENCE [LARGE SCALE GENOMIC DNA]</scope>
</reference>
<reference key="4">
    <citation type="journal article" date="2004" name="Genome Res.">
        <title>The status, quality, and expansion of the NIH full-length cDNA project: the Mammalian Gene Collection (MGC).</title>
        <authorList>
            <consortium name="The MGC Project Team"/>
        </authorList>
    </citation>
    <scope>NUCLEOTIDE SEQUENCE [LARGE SCALE MRNA] (ISOFORM 2)</scope>
    <source>
        <tissue>Eye</tissue>
        <tissue>Muscle</tissue>
    </source>
</reference>
<reference key="5">
    <citation type="journal article" date="1991" name="Nucleic Acids Res.">
        <title>Members of the zinc finger protein gene family sharing a conserved N-terminal module.</title>
        <authorList>
            <person name="Rosati M."/>
            <person name="Marino M."/>
            <person name="Franze A."/>
            <person name="Tramontano A."/>
            <person name="Grimaldi G."/>
        </authorList>
    </citation>
    <scope>NUCLEOTIDE SEQUENCE [MRNA] OF 1-392 (ISOFORM 2)</scope>
</reference>
<name>ZNF2_HUMAN</name>
<sequence>MAAVSPTTRCQESVTFEDVAVVFTDEEWSRLVPIQRDLYKEVMLENYNSIVSLGLPVPQPDVIFQLKRGDKPWMVDLHGSEEREWPESVSLDWETKPEIHDASDKKSEGSLRECLGRQSPLCPKFEVHTPNGRMGTEKQSPSGETRKKSLSRDKGLRRRSALSREILTKERHQECSDCGKTFFDHSSLTRHQRTHTGEKPYDCRECGKAFSHRSSLSRHLMSHTGESPYECSVCSKAFFDRSSLTVHQRIHTGEKPFQCNECGKAFFDRSSLTRHQRIHTGESPYECHQCGKAFSQKSILTRHQLIHTGRKPYECNECGKAFYGVSSLNRHQKAHAGDPRYQCNECGKAFFDRSSLTQHQKIHTGDKPYECSECGKAFSQRCRLTRHQRVHTGEKPFECTVCGKVFSSKSSVIQHQRRYAKQGID</sequence>
<proteinExistence type="evidence at protein level"/>
<organism>
    <name type="scientific">Homo sapiens</name>
    <name type="common">Human</name>
    <dbReference type="NCBI Taxonomy" id="9606"/>
    <lineage>
        <taxon>Eukaryota</taxon>
        <taxon>Metazoa</taxon>
        <taxon>Chordata</taxon>
        <taxon>Craniata</taxon>
        <taxon>Vertebrata</taxon>
        <taxon>Euteleostomi</taxon>
        <taxon>Mammalia</taxon>
        <taxon>Eutheria</taxon>
        <taxon>Euarchontoglires</taxon>
        <taxon>Primates</taxon>
        <taxon>Haplorrhini</taxon>
        <taxon>Catarrhini</taxon>
        <taxon>Hominidae</taxon>
        <taxon>Homo</taxon>
    </lineage>
</organism>
<protein>
    <recommendedName>
        <fullName evidence="4">Zinc finger protein 2</fullName>
    </recommendedName>
    <alternativeName>
        <fullName>Zinc finger protein 2.2</fullName>
    </alternativeName>
    <alternativeName>
        <fullName>Zinc finger protein 661</fullName>
    </alternativeName>
</protein>
<gene>
    <name evidence="5" type="primary">ZNF2</name>
    <name type="synonym">ZNF661</name>
</gene>